<reference key="1">
    <citation type="journal article" date="2013" name="Nature">
        <title>The zebrafish reference genome sequence and its relationship to the human genome.</title>
        <authorList>
            <person name="Howe K."/>
            <person name="Clark M.D."/>
            <person name="Torroja C.F."/>
            <person name="Torrance J."/>
            <person name="Berthelot C."/>
            <person name="Muffato M."/>
            <person name="Collins J.E."/>
            <person name="Humphray S."/>
            <person name="McLaren K."/>
            <person name="Matthews L."/>
            <person name="McLaren S."/>
            <person name="Sealy I."/>
            <person name="Caccamo M."/>
            <person name="Churcher C."/>
            <person name="Scott C."/>
            <person name="Barrett J.C."/>
            <person name="Koch R."/>
            <person name="Rauch G.J."/>
            <person name="White S."/>
            <person name="Chow W."/>
            <person name="Kilian B."/>
            <person name="Quintais L.T."/>
            <person name="Guerra-Assuncao J.A."/>
            <person name="Zhou Y."/>
            <person name="Gu Y."/>
            <person name="Yen J."/>
            <person name="Vogel J.H."/>
            <person name="Eyre T."/>
            <person name="Redmond S."/>
            <person name="Banerjee R."/>
            <person name="Chi J."/>
            <person name="Fu B."/>
            <person name="Langley E."/>
            <person name="Maguire S.F."/>
            <person name="Laird G.K."/>
            <person name="Lloyd D."/>
            <person name="Kenyon E."/>
            <person name="Donaldson S."/>
            <person name="Sehra H."/>
            <person name="Almeida-King J."/>
            <person name="Loveland J."/>
            <person name="Trevanion S."/>
            <person name="Jones M."/>
            <person name="Quail M."/>
            <person name="Willey D."/>
            <person name="Hunt A."/>
            <person name="Burton J."/>
            <person name="Sims S."/>
            <person name="McLay K."/>
            <person name="Plumb B."/>
            <person name="Davis J."/>
            <person name="Clee C."/>
            <person name="Oliver K."/>
            <person name="Clark R."/>
            <person name="Riddle C."/>
            <person name="Elliot D."/>
            <person name="Threadgold G."/>
            <person name="Harden G."/>
            <person name="Ware D."/>
            <person name="Begum S."/>
            <person name="Mortimore B."/>
            <person name="Kerry G."/>
            <person name="Heath P."/>
            <person name="Phillimore B."/>
            <person name="Tracey A."/>
            <person name="Corby N."/>
            <person name="Dunn M."/>
            <person name="Johnson C."/>
            <person name="Wood J."/>
            <person name="Clark S."/>
            <person name="Pelan S."/>
            <person name="Griffiths G."/>
            <person name="Smith M."/>
            <person name="Glithero R."/>
            <person name="Howden P."/>
            <person name="Barker N."/>
            <person name="Lloyd C."/>
            <person name="Stevens C."/>
            <person name="Harley J."/>
            <person name="Holt K."/>
            <person name="Panagiotidis G."/>
            <person name="Lovell J."/>
            <person name="Beasley H."/>
            <person name="Henderson C."/>
            <person name="Gordon D."/>
            <person name="Auger K."/>
            <person name="Wright D."/>
            <person name="Collins J."/>
            <person name="Raisen C."/>
            <person name="Dyer L."/>
            <person name="Leung K."/>
            <person name="Robertson L."/>
            <person name="Ambridge K."/>
            <person name="Leongamornlert D."/>
            <person name="McGuire S."/>
            <person name="Gilderthorp R."/>
            <person name="Griffiths C."/>
            <person name="Manthravadi D."/>
            <person name="Nichol S."/>
            <person name="Barker G."/>
            <person name="Whitehead S."/>
            <person name="Kay M."/>
            <person name="Brown J."/>
            <person name="Murnane C."/>
            <person name="Gray E."/>
            <person name="Humphries M."/>
            <person name="Sycamore N."/>
            <person name="Barker D."/>
            <person name="Saunders D."/>
            <person name="Wallis J."/>
            <person name="Babbage A."/>
            <person name="Hammond S."/>
            <person name="Mashreghi-Mohammadi M."/>
            <person name="Barr L."/>
            <person name="Martin S."/>
            <person name="Wray P."/>
            <person name="Ellington A."/>
            <person name="Matthews N."/>
            <person name="Ellwood M."/>
            <person name="Woodmansey R."/>
            <person name="Clark G."/>
            <person name="Cooper J."/>
            <person name="Tromans A."/>
            <person name="Grafham D."/>
            <person name="Skuce C."/>
            <person name="Pandian R."/>
            <person name="Andrews R."/>
            <person name="Harrison E."/>
            <person name="Kimberley A."/>
            <person name="Garnett J."/>
            <person name="Fosker N."/>
            <person name="Hall R."/>
            <person name="Garner P."/>
            <person name="Kelly D."/>
            <person name="Bird C."/>
            <person name="Palmer S."/>
            <person name="Gehring I."/>
            <person name="Berger A."/>
            <person name="Dooley C.M."/>
            <person name="Ersan-Urun Z."/>
            <person name="Eser C."/>
            <person name="Geiger H."/>
            <person name="Geisler M."/>
            <person name="Karotki L."/>
            <person name="Kirn A."/>
            <person name="Konantz J."/>
            <person name="Konantz M."/>
            <person name="Oberlander M."/>
            <person name="Rudolph-Geiger S."/>
            <person name="Teucke M."/>
            <person name="Lanz C."/>
            <person name="Raddatz G."/>
            <person name="Osoegawa K."/>
            <person name="Zhu B."/>
            <person name="Rapp A."/>
            <person name="Widaa S."/>
            <person name="Langford C."/>
            <person name="Yang F."/>
            <person name="Schuster S.C."/>
            <person name="Carter N.P."/>
            <person name="Harrow J."/>
            <person name="Ning Z."/>
            <person name="Herrero J."/>
            <person name="Searle S.M."/>
            <person name="Enright A."/>
            <person name="Geisler R."/>
            <person name="Plasterk R.H."/>
            <person name="Lee C."/>
            <person name="Westerfield M."/>
            <person name="de Jong P.J."/>
            <person name="Zon L.I."/>
            <person name="Postlethwait J.H."/>
            <person name="Nusslein-Volhard C."/>
            <person name="Hubbard T.J."/>
            <person name="Roest Crollius H."/>
            <person name="Rogers J."/>
            <person name="Stemple D.L."/>
        </authorList>
    </citation>
    <scope>NUCLEOTIDE SEQUENCE [LARGE SCALE GENOMIC DNA]</scope>
    <source>
        <strain>Tuebingen</strain>
    </source>
</reference>
<reference key="2">
    <citation type="submission" date="2004-06" db="EMBL/GenBank/DDBJ databases">
        <authorList>
            <consortium name="NIH - Zebrafish Gene Collection (ZGC) project"/>
        </authorList>
    </citation>
    <scope>NUCLEOTIDE SEQUENCE [LARGE SCALE MRNA]</scope>
</reference>
<feature type="chain" id="PRO_0000415675" description="Inosine-5'-monophosphate dehydrogenase 1a">
    <location>
        <begin position="1"/>
        <end position="544"/>
    </location>
</feature>
<feature type="domain" description="CBS 1" evidence="1">
    <location>
        <begin position="114"/>
        <end position="175"/>
    </location>
</feature>
<feature type="domain" description="CBS 2" evidence="1">
    <location>
        <begin position="179"/>
        <end position="237"/>
    </location>
</feature>
<feature type="region of interest" description="Disordered" evidence="2">
    <location>
        <begin position="520"/>
        <end position="544"/>
    </location>
</feature>
<feature type="active site" description="Thioimidate intermediate" evidence="1">
    <location>
        <position position="331"/>
    </location>
</feature>
<feature type="active site" description="Proton acceptor" evidence="1">
    <location>
        <position position="429"/>
    </location>
</feature>
<feature type="binding site" evidence="1">
    <location>
        <begin position="274"/>
        <end position="276"/>
    </location>
    <ligand>
        <name>NAD(+)</name>
        <dbReference type="ChEBI" id="CHEBI:57540"/>
    </ligand>
</feature>
<feature type="binding site" evidence="1">
    <location>
        <begin position="324"/>
        <end position="326"/>
    </location>
    <ligand>
        <name>NAD(+)</name>
        <dbReference type="ChEBI" id="CHEBI:57540"/>
    </ligand>
</feature>
<feature type="binding site" description="in other chain" evidence="1">
    <location>
        <position position="326"/>
    </location>
    <ligand>
        <name>K(+)</name>
        <dbReference type="ChEBI" id="CHEBI:29103"/>
        <note>ligand shared between two tetrameric partners</note>
    </ligand>
</feature>
<feature type="binding site" description="in other chain" evidence="1">
    <location>
        <position position="328"/>
    </location>
    <ligand>
        <name>K(+)</name>
        <dbReference type="ChEBI" id="CHEBI:29103"/>
        <note>ligand shared between two tetrameric partners</note>
    </ligand>
</feature>
<feature type="binding site" evidence="1">
    <location>
        <position position="329"/>
    </location>
    <ligand>
        <name>IMP</name>
        <dbReference type="ChEBI" id="CHEBI:58053"/>
    </ligand>
</feature>
<feature type="binding site" description="in other chain" evidence="1">
    <location>
        <position position="331"/>
    </location>
    <ligand>
        <name>K(+)</name>
        <dbReference type="ChEBI" id="CHEBI:29103"/>
        <note>ligand shared between two tetrameric partners</note>
    </ligand>
</feature>
<feature type="binding site" evidence="1">
    <location>
        <begin position="364"/>
        <end position="366"/>
    </location>
    <ligand>
        <name>IMP</name>
        <dbReference type="ChEBI" id="CHEBI:58053"/>
    </ligand>
</feature>
<feature type="binding site" evidence="1">
    <location>
        <begin position="387"/>
        <end position="388"/>
    </location>
    <ligand>
        <name>IMP</name>
        <dbReference type="ChEBI" id="CHEBI:58053"/>
    </ligand>
</feature>
<feature type="binding site" evidence="1">
    <location>
        <begin position="411"/>
        <end position="415"/>
    </location>
    <ligand>
        <name>IMP</name>
        <dbReference type="ChEBI" id="CHEBI:58053"/>
    </ligand>
</feature>
<feature type="binding site" evidence="1">
    <location>
        <position position="441"/>
    </location>
    <ligand>
        <name>IMP</name>
        <dbReference type="ChEBI" id="CHEBI:58053"/>
    </ligand>
</feature>
<feature type="binding site" evidence="1">
    <location>
        <position position="500"/>
    </location>
    <ligand>
        <name>K(+)</name>
        <dbReference type="ChEBI" id="CHEBI:29103"/>
        <note>ligand shared between two tetrameric partners</note>
    </ligand>
</feature>
<feature type="binding site" evidence="1">
    <location>
        <position position="501"/>
    </location>
    <ligand>
        <name>K(+)</name>
        <dbReference type="ChEBI" id="CHEBI:29103"/>
        <note>ligand shared between two tetrameric partners</note>
    </ligand>
</feature>
<feature type="binding site" evidence="1">
    <location>
        <position position="502"/>
    </location>
    <ligand>
        <name>K(+)</name>
        <dbReference type="ChEBI" id="CHEBI:29103"/>
        <note>ligand shared between two tetrameric partners</note>
    </ligand>
</feature>
<proteinExistence type="evidence at transcript level"/>
<sequence length="544" mass="58693">MADYLISGGTGYVPEDGLTAQQLFAIGDGLTYNDFLILPGFIDFISDEVDLTSALTRKITLKTPLISSPMDTVTESSMAIAMALMGGIGIIHHNCTPEFQANEVRKVKKFEQGFITDPVVMSPRHTVGDVFEAKVRHGFSGIPVTETGKMGSKLVGIVTSRDIDFLSEKDYDRPLEESMTKREDLVVAPAGVTLKEANDILQRSKKGKLPIVNDSDELVAIIARTDLKKNRDYPLASKDSRKQLLCGAAIGTREDDKYRLDLLMQAGVDVIVLDSSQGNSVFQISMINYIKQKYPELQVVGGNVVTAAQAKNLIDAGVDALRVGMGCGSICITQEVMACGRPQGTSVYKVAEYARRFGVPVIADGGIQTVGHVVKALALGASTVMMGSLLAATTEAPGEYFFSDGVRLKKYRGMGSLDAMEKNNSSQKRYFSEGDKVKVAQGVSGSVQDKGSIHKFVPYLIAGIQHGCQDIGAKSLSILRSMMYSGELKFEKRTMSAQVEGGVHGLHSYSFLPFTRNGYIEPGSRGHPRAGPNVPSPAVTKHSS</sequence>
<protein>
    <recommendedName>
        <fullName evidence="1">Inosine-5'-monophosphate dehydrogenase 1a</fullName>
        <shortName evidence="1">IMP dehydrogenase 1a</shortName>
        <shortName evidence="1">IMPD 1a</shortName>
        <shortName evidence="1">IMPDH 1a</shortName>
        <ecNumber evidence="1">1.1.1.205</ecNumber>
    </recommendedName>
</protein>
<accession>Q6GMG5</accession>
<comment type="function">
    <text evidence="1">Catalyzes the conversion of inosine 5'-phosphate (IMP) to xanthosine 5'-phosphate (XMP), the first committed and rate-limiting step in the de novo synthesis of guanine nucleotides, and therefore plays an important role in the regulation of cell growth.</text>
</comment>
<comment type="catalytic activity">
    <reaction evidence="1">
        <text>IMP + NAD(+) + H2O = XMP + NADH + H(+)</text>
        <dbReference type="Rhea" id="RHEA:11708"/>
        <dbReference type="ChEBI" id="CHEBI:15377"/>
        <dbReference type="ChEBI" id="CHEBI:15378"/>
        <dbReference type="ChEBI" id="CHEBI:57464"/>
        <dbReference type="ChEBI" id="CHEBI:57540"/>
        <dbReference type="ChEBI" id="CHEBI:57945"/>
        <dbReference type="ChEBI" id="CHEBI:58053"/>
        <dbReference type="EC" id="1.1.1.205"/>
    </reaction>
</comment>
<comment type="cofactor">
    <cofactor evidence="1">
        <name>K(+)</name>
        <dbReference type="ChEBI" id="CHEBI:29103"/>
    </cofactor>
</comment>
<comment type="activity regulation">
    <text evidence="1">Mycophenolic acid (MPA) is a non-competitive inhibitor that prevents formation of the closed enzyme conformation by binding to the same site as the amobile flap. In contrast, mizoribine monophosphate (MZP) is a competitive inhibitor that induces the closed conformation. MPA is a potent inhibitor of mammalian IMPDHs but a poor inhibitor of the bacterial enzymes. MZP is a more potent inhibitor of bacterial IMPDH.</text>
</comment>
<comment type="pathway">
    <text evidence="1">Purine metabolism; XMP biosynthesis via de novo pathway; XMP from IMP: step 1/1.</text>
</comment>
<comment type="subunit">
    <text evidence="1">Homotetramer.</text>
</comment>
<comment type="subcellular location">
    <subcellularLocation>
        <location evidence="1">Cytoplasm</location>
    </subcellularLocation>
    <subcellularLocation>
        <location evidence="1">Nucleus</location>
    </subcellularLocation>
</comment>
<comment type="similarity">
    <text evidence="1">Belongs to the IMPDH/GMPR family.</text>
</comment>
<name>IMDH1_DANRE</name>
<keyword id="KW-0129">CBS domain</keyword>
<keyword id="KW-0963">Cytoplasm</keyword>
<keyword id="KW-0332">GMP biosynthesis</keyword>
<keyword id="KW-0479">Metal-binding</keyword>
<keyword id="KW-0520">NAD</keyword>
<keyword id="KW-0539">Nucleus</keyword>
<keyword id="KW-0560">Oxidoreductase</keyword>
<keyword id="KW-0630">Potassium</keyword>
<keyword id="KW-0658">Purine biosynthesis</keyword>
<keyword id="KW-1185">Reference proteome</keyword>
<keyword id="KW-0677">Repeat</keyword>
<dbReference type="EC" id="1.1.1.205" evidence="1"/>
<dbReference type="EMBL" id="BX927293">
    <property type="protein sequence ID" value="CAN87720.1"/>
    <property type="molecule type" value="Genomic_DNA"/>
</dbReference>
<dbReference type="EMBL" id="BC074090">
    <property type="protein sequence ID" value="AAH74090.1"/>
    <property type="molecule type" value="mRNA"/>
</dbReference>
<dbReference type="RefSeq" id="NP_001002177.1">
    <property type="nucleotide sequence ID" value="NM_001002177.2"/>
</dbReference>
<dbReference type="SMR" id="Q6GMG5"/>
<dbReference type="FunCoup" id="Q6GMG5">
    <property type="interactions" value="885"/>
</dbReference>
<dbReference type="STRING" id="7955.ENSDARP00000019185"/>
<dbReference type="PaxDb" id="7955-ENSDARP00000091935"/>
<dbReference type="Ensembl" id="ENSDART00000017619">
    <property type="protein sequence ID" value="ENSDARP00000019185"/>
    <property type="gene ID" value="ENSDARG00000042336"/>
</dbReference>
<dbReference type="GeneID" id="431724"/>
<dbReference type="KEGG" id="dre:431724"/>
<dbReference type="AGR" id="ZFIN:ZDB-GENE-040704-15"/>
<dbReference type="CTD" id="431724"/>
<dbReference type="ZFIN" id="ZDB-GENE-040704-15">
    <property type="gene designation" value="impdh1a"/>
</dbReference>
<dbReference type="eggNOG" id="KOG2550">
    <property type="taxonomic scope" value="Eukaryota"/>
</dbReference>
<dbReference type="HOGENOM" id="CLU_022552_2_1_1"/>
<dbReference type="InParanoid" id="Q6GMG5"/>
<dbReference type="OMA" id="AMEKNTN"/>
<dbReference type="OrthoDB" id="416622at2759"/>
<dbReference type="PhylomeDB" id="Q6GMG5"/>
<dbReference type="TreeFam" id="TF300378"/>
<dbReference type="Reactome" id="R-DRE-6798695">
    <property type="pathway name" value="Neutrophil degranulation"/>
</dbReference>
<dbReference type="Reactome" id="R-DRE-73817">
    <property type="pathway name" value="Purine ribonucleoside monophosphate biosynthesis"/>
</dbReference>
<dbReference type="Reactome" id="R-DRE-9748787">
    <property type="pathway name" value="Azathioprine ADME"/>
</dbReference>
<dbReference type="UniPathway" id="UPA00601">
    <property type="reaction ID" value="UER00295"/>
</dbReference>
<dbReference type="PRO" id="PR:Q6GMG5"/>
<dbReference type="Proteomes" id="UP000000437">
    <property type="component" value="Alternate scaffold 18"/>
</dbReference>
<dbReference type="Proteomes" id="UP000000437">
    <property type="component" value="Chromosome 18"/>
</dbReference>
<dbReference type="Bgee" id="ENSDARG00000042336">
    <property type="expression patterns" value="Expressed in retina and 18 other cell types or tissues"/>
</dbReference>
<dbReference type="ExpressionAtlas" id="Q6GMG5">
    <property type="expression patterns" value="baseline"/>
</dbReference>
<dbReference type="GO" id="GO:0005737">
    <property type="term" value="C:cytoplasm"/>
    <property type="evidence" value="ECO:0000318"/>
    <property type="project" value="GO_Central"/>
</dbReference>
<dbReference type="GO" id="GO:0005634">
    <property type="term" value="C:nucleus"/>
    <property type="evidence" value="ECO:0007669"/>
    <property type="project" value="UniProtKB-SubCell"/>
</dbReference>
<dbReference type="GO" id="GO:0003938">
    <property type="term" value="F:IMP dehydrogenase activity"/>
    <property type="evidence" value="ECO:0000318"/>
    <property type="project" value="GO_Central"/>
</dbReference>
<dbReference type="GO" id="GO:0046872">
    <property type="term" value="F:metal ion binding"/>
    <property type="evidence" value="ECO:0007669"/>
    <property type="project" value="UniProtKB-UniRule"/>
</dbReference>
<dbReference type="GO" id="GO:0000166">
    <property type="term" value="F:nucleotide binding"/>
    <property type="evidence" value="ECO:0007669"/>
    <property type="project" value="UniProtKB-UniRule"/>
</dbReference>
<dbReference type="GO" id="GO:0106387">
    <property type="term" value="P:'de novo' GMP biosynthetic process"/>
    <property type="evidence" value="ECO:0000315"/>
    <property type="project" value="ZFIN"/>
</dbReference>
<dbReference type="GO" id="GO:0048066">
    <property type="term" value="P:developmental pigmentation"/>
    <property type="evidence" value="ECO:0000315"/>
    <property type="project" value="ZFIN"/>
</dbReference>
<dbReference type="GO" id="GO:0001654">
    <property type="term" value="P:eye development"/>
    <property type="evidence" value="ECO:0000315"/>
    <property type="project" value="ZFIN"/>
</dbReference>
<dbReference type="GO" id="GO:0006183">
    <property type="term" value="P:GTP biosynthetic process"/>
    <property type="evidence" value="ECO:0000318"/>
    <property type="project" value="GO_Central"/>
</dbReference>
<dbReference type="CDD" id="cd04601">
    <property type="entry name" value="CBS_pair_IMPDH"/>
    <property type="match status" value="1"/>
</dbReference>
<dbReference type="CDD" id="cd00381">
    <property type="entry name" value="IMPDH"/>
    <property type="match status" value="1"/>
</dbReference>
<dbReference type="FunFam" id="3.20.20.70:FF:000007">
    <property type="entry name" value="Chromosome 19 SCAF14664, whole genome shotgun sequence"/>
    <property type="match status" value="1"/>
</dbReference>
<dbReference type="Gene3D" id="3.20.20.70">
    <property type="entry name" value="Aldolase class I"/>
    <property type="match status" value="1"/>
</dbReference>
<dbReference type="HAMAP" id="MF_01964">
    <property type="entry name" value="IMPDH"/>
    <property type="match status" value="1"/>
</dbReference>
<dbReference type="InterPro" id="IPR013785">
    <property type="entry name" value="Aldolase_TIM"/>
</dbReference>
<dbReference type="InterPro" id="IPR000644">
    <property type="entry name" value="CBS_dom"/>
</dbReference>
<dbReference type="InterPro" id="IPR005990">
    <property type="entry name" value="IMP_DH"/>
</dbReference>
<dbReference type="InterPro" id="IPR015875">
    <property type="entry name" value="IMP_DH/GMP_Rdtase_CS"/>
</dbReference>
<dbReference type="InterPro" id="IPR001093">
    <property type="entry name" value="IMP_DH_GMPRt"/>
</dbReference>
<dbReference type="NCBIfam" id="TIGR01302">
    <property type="entry name" value="IMP_dehydrog"/>
    <property type="match status" value="1"/>
</dbReference>
<dbReference type="PANTHER" id="PTHR11911:SF74">
    <property type="entry name" value="INOSINE-5'-MONOPHOSPHATE DEHYDROGENASE 1"/>
    <property type="match status" value="1"/>
</dbReference>
<dbReference type="PANTHER" id="PTHR11911">
    <property type="entry name" value="INOSINE-5-MONOPHOSPHATE DEHYDROGENASE RELATED"/>
    <property type="match status" value="1"/>
</dbReference>
<dbReference type="Pfam" id="PF00571">
    <property type="entry name" value="CBS"/>
    <property type="match status" value="2"/>
</dbReference>
<dbReference type="Pfam" id="PF00478">
    <property type="entry name" value="IMPDH"/>
    <property type="match status" value="1"/>
</dbReference>
<dbReference type="PIRSF" id="PIRSF000130">
    <property type="entry name" value="IMPDH"/>
    <property type="match status" value="1"/>
</dbReference>
<dbReference type="SMART" id="SM00116">
    <property type="entry name" value="CBS"/>
    <property type="match status" value="2"/>
</dbReference>
<dbReference type="SMART" id="SM01240">
    <property type="entry name" value="IMPDH"/>
    <property type="match status" value="1"/>
</dbReference>
<dbReference type="SUPFAM" id="SSF51412">
    <property type="entry name" value="Inosine monophosphate dehydrogenase (IMPDH)"/>
    <property type="match status" value="2"/>
</dbReference>
<dbReference type="PROSITE" id="PS51371">
    <property type="entry name" value="CBS"/>
    <property type="match status" value="2"/>
</dbReference>
<dbReference type="PROSITE" id="PS00487">
    <property type="entry name" value="IMP_DH_GMP_RED"/>
    <property type="match status" value="1"/>
</dbReference>
<gene>
    <name type="primary">impdh1a</name>
    <name type="ORF">si:dkey-95h12.3</name>
    <name type="ORF">zgc:91911</name>
</gene>
<evidence type="ECO:0000255" key="1">
    <source>
        <dbReference type="HAMAP-Rule" id="MF_03156"/>
    </source>
</evidence>
<evidence type="ECO:0000256" key="2">
    <source>
        <dbReference type="SAM" id="MobiDB-lite"/>
    </source>
</evidence>
<organism>
    <name type="scientific">Danio rerio</name>
    <name type="common">Zebrafish</name>
    <name type="synonym">Brachydanio rerio</name>
    <dbReference type="NCBI Taxonomy" id="7955"/>
    <lineage>
        <taxon>Eukaryota</taxon>
        <taxon>Metazoa</taxon>
        <taxon>Chordata</taxon>
        <taxon>Craniata</taxon>
        <taxon>Vertebrata</taxon>
        <taxon>Euteleostomi</taxon>
        <taxon>Actinopterygii</taxon>
        <taxon>Neopterygii</taxon>
        <taxon>Teleostei</taxon>
        <taxon>Ostariophysi</taxon>
        <taxon>Cypriniformes</taxon>
        <taxon>Danionidae</taxon>
        <taxon>Danioninae</taxon>
        <taxon>Danio</taxon>
    </lineage>
</organism>